<dbReference type="EC" id="3.4.-.-"/>
<dbReference type="EMBL" id="CP017626">
    <property type="protein sequence ID" value="AOW29103.1"/>
    <property type="molecule type" value="Genomic_DNA"/>
</dbReference>
<dbReference type="RefSeq" id="XP_711591.2">
    <property type="nucleotide sequence ID" value="XM_706499.2"/>
</dbReference>
<dbReference type="SMR" id="Q59PG6"/>
<dbReference type="STRING" id="237561.Q59PG6"/>
<dbReference type="MEROPS" id="M67.A01"/>
<dbReference type="EnsemblFungi" id="C4_03450C_A-T">
    <property type="protein sequence ID" value="C4_03450C_A-T-p1"/>
    <property type="gene ID" value="C4_03450C_A"/>
</dbReference>
<dbReference type="GeneID" id="3646811"/>
<dbReference type="KEGG" id="cal:CAALFM_C403450CA"/>
<dbReference type="CGD" id="CAL0000189891">
    <property type="gene designation" value="JAB1"/>
</dbReference>
<dbReference type="VEuPathDB" id="FungiDB:C4_03450C_A"/>
<dbReference type="eggNOG" id="KOG1554">
    <property type="taxonomic scope" value="Eukaryota"/>
</dbReference>
<dbReference type="HOGENOM" id="CLU_053034_1_0_1"/>
<dbReference type="InParanoid" id="Q59PG6"/>
<dbReference type="OrthoDB" id="605656at2759"/>
<dbReference type="Proteomes" id="UP000000559">
    <property type="component" value="Chromosome 4"/>
</dbReference>
<dbReference type="GO" id="GO:0008180">
    <property type="term" value="C:COP9 signalosome"/>
    <property type="evidence" value="ECO:0000318"/>
    <property type="project" value="GO_Central"/>
</dbReference>
<dbReference type="GO" id="GO:0005737">
    <property type="term" value="C:cytoplasm"/>
    <property type="evidence" value="ECO:0000318"/>
    <property type="project" value="GO_Central"/>
</dbReference>
<dbReference type="GO" id="GO:0019784">
    <property type="term" value="F:deNEDDylase activity"/>
    <property type="evidence" value="ECO:0000318"/>
    <property type="project" value="GO_Central"/>
</dbReference>
<dbReference type="GO" id="GO:0046872">
    <property type="term" value="F:metal ion binding"/>
    <property type="evidence" value="ECO:0007669"/>
    <property type="project" value="UniProtKB-KW"/>
</dbReference>
<dbReference type="GO" id="GO:0008237">
    <property type="term" value="F:metallopeptidase activity"/>
    <property type="evidence" value="ECO:0000318"/>
    <property type="project" value="GO_Central"/>
</dbReference>
<dbReference type="GO" id="GO:0000338">
    <property type="term" value="P:protein deneddylation"/>
    <property type="evidence" value="ECO:0000315"/>
    <property type="project" value="CGD"/>
</dbReference>
<dbReference type="GO" id="GO:0006508">
    <property type="term" value="P:proteolysis"/>
    <property type="evidence" value="ECO:0007669"/>
    <property type="project" value="UniProtKB-KW"/>
</dbReference>
<dbReference type="GO" id="GO:0051726">
    <property type="term" value="P:regulation of cell cycle"/>
    <property type="evidence" value="ECO:0000318"/>
    <property type="project" value="GO_Central"/>
</dbReference>
<dbReference type="CDD" id="cd08069">
    <property type="entry name" value="MPN_RPN11_CSN5"/>
    <property type="match status" value="1"/>
</dbReference>
<dbReference type="FunFam" id="3.40.140.10:FF:000003">
    <property type="entry name" value="COP9 signalosome complex subunit 5"/>
    <property type="match status" value="1"/>
</dbReference>
<dbReference type="Gene3D" id="3.40.140.10">
    <property type="entry name" value="Cytidine Deaminase, domain 2"/>
    <property type="match status" value="1"/>
</dbReference>
<dbReference type="InterPro" id="IPR000555">
    <property type="entry name" value="JAMM/MPN+_dom"/>
</dbReference>
<dbReference type="InterPro" id="IPR050242">
    <property type="entry name" value="JAMM_MPN+_peptidase_M67A"/>
</dbReference>
<dbReference type="InterPro" id="IPR037518">
    <property type="entry name" value="MPN"/>
</dbReference>
<dbReference type="PANTHER" id="PTHR10410">
    <property type="entry name" value="EUKARYOTIC TRANSLATION INITIATION FACTOR 3 -RELATED"/>
    <property type="match status" value="1"/>
</dbReference>
<dbReference type="Pfam" id="PF01398">
    <property type="entry name" value="JAB"/>
    <property type="match status" value="1"/>
</dbReference>
<dbReference type="SMART" id="SM00232">
    <property type="entry name" value="JAB_MPN"/>
    <property type="match status" value="1"/>
</dbReference>
<dbReference type="SUPFAM" id="SSF102712">
    <property type="entry name" value="JAB1/MPN domain"/>
    <property type="match status" value="1"/>
</dbReference>
<dbReference type="PROSITE" id="PS50249">
    <property type="entry name" value="MPN"/>
    <property type="match status" value="1"/>
</dbReference>
<proteinExistence type="inferred from homology"/>
<comment type="function">
    <text evidence="1">Catalytic Component of the COP9 signalosome (CSN) complex that acts as an regulator of the ubiquitin (Ubl) conjugation pathway by mediating the deneddylation of the cullin subunit of SCF-type E3 ubiquitin-protein ligase complexes.</text>
</comment>
<comment type="subunit">
    <text evidence="1">Component of the COP9 signalosome (CSN) complex.</text>
</comment>
<comment type="subcellular location">
    <subcellularLocation>
        <location evidence="1">Cytoplasm</location>
    </subcellularLocation>
    <subcellularLocation>
        <location evidence="1">Nucleus</location>
    </subcellularLocation>
</comment>
<comment type="domain">
    <text evidence="1">The JAMM motif is essential for the protease activity of the CSN complex resulting in deneddylation of cullins. It constitutes the catalytic center of the complex (By similarity).</text>
</comment>
<comment type="similarity">
    <text evidence="4">Belongs to the peptidase M67A family. CSN5 subfamily.</text>
</comment>
<protein>
    <recommendedName>
        <fullName>COP9 signalosome complex subunit 5</fullName>
        <ecNumber>3.4.-.-</ecNumber>
    </recommendedName>
</protein>
<evidence type="ECO:0000250" key="1"/>
<evidence type="ECO:0000255" key="2">
    <source>
        <dbReference type="PROSITE-ProRule" id="PRU01182"/>
    </source>
</evidence>
<evidence type="ECO:0000256" key="3">
    <source>
        <dbReference type="SAM" id="MobiDB-lite"/>
    </source>
</evidence>
<evidence type="ECO:0000305" key="4"/>
<keyword id="KW-0963">Cytoplasm</keyword>
<keyword id="KW-0378">Hydrolase</keyword>
<keyword id="KW-0479">Metal-binding</keyword>
<keyword id="KW-0482">Metalloprotease</keyword>
<keyword id="KW-0539">Nucleus</keyword>
<keyword id="KW-0645">Protease</keyword>
<keyword id="KW-1185">Reference proteome</keyword>
<keyword id="KW-0736">Signalosome</keyword>
<keyword id="KW-0862">Zinc</keyword>
<sequence length="609" mass="69519">MTCLDELAHSLESKSDTTNFKTRNSKIKTIDLYQQNELSGKHPQDQDKFYRLPAIDPIARDKKPWKEDINYFNKCYISSLALMKMCTHAQTGGSIEIMGMLVGKISGHSIIVMDTYRLPVEGTETRVNAQNEAYTYMVEYLTERQQLSNGKNEENIVGWYHSHPGYGCWLSGIDVSTQSLNQGFQDPYLAIVVDPVKTLKQGKVEIGAFRTYPEGSQQQPSMTNKTRKDQNKPHNSGANANRKILPKSKQKDFGSHADKYYSLDIEIFTSSWDDKVIEMLKDEDSLTWMKNLLVDSNNNDKILGIRKDEIRSIELIKNYELISQGNHNADEGETIFDLIEQLKIQANTPKFMLDKLTTMKFDSTFESVLYKRLLKKTQKSTTTKKNRKDLSTDIDDETMLDESDLEKNVGTGGIETSISSDDDDEEEEGEGEGNSSSRRDNNNNEVEEGPTDEVDSEYANEELLEEVGALENYNFNDLLENKSANKFLRSEQKIKHKNRPIHQRMDNSSMISEWNRLGHQQQHMPADYPYQWSSNVANLVKTSKTNRRRERLHRLQGASIDNKKQFELGLHGSPESKAKSANLVKLAKSIGLNEVFDLITLDAQQKLFG</sequence>
<accession>Q59PG6</accession>
<accession>A0A1D8PLU1</accession>
<accession>Q59PI9</accession>
<gene>
    <name type="primary">JAB1</name>
    <name type="synonym">CSN5</name>
    <name type="synonym">RRI1</name>
    <name type="ordered locus">CAALFM_C403450CA</name>
    <name type="ORF">CaO19.10880</name>
    <name type="ORF">CaO19.3372</name>
</gene>
<feature type="chain" id="PRO_0000194848" description="COP9 signalosome complex subunit 5">
    <location>
        <begin position="1"/>
        <end position="609"/>
    </location>
</feature>
<feature type="domain" description="MPN" evidence="2">
    <location>
        <begin position="75"/>
        <end position="215"/>
    </location>
</feature>
<feature type="region of interest" description="Disordered" evidence="3">
    <location>
        <begin position="210"/>
        <end position="248"/>
    </location>
</feature>
<feature type="region of interest" description="Disordered" evidence="3">
    <location>
        <begin position="381"/>
        <end position="456"/>
    </location>
</feature>
<feature type="short sequence motif" description="JAMM motif" evidence="2">
    <location>
        <begin position="161"/>
        <end position="174"/>
    </location>
</feature>
<feature type="compositionally biased region" description="Polar residues" evidence="3">
    <location>
        <begin position="214"/>
        <end position="224"/>
    </location>
</feature>
<feature type="compositionally biased region" description="Acidic residues" evidence="3">
    <location>
        <begin position="392"/>
        <end position="404"/>
    </location>
</feature>
<feature type="compositionally biased region" description="Acidic residues" evidence="3">
    <location>
        <begin position="420"/>
        <end position="431"/>
    </location>
</feature>
<feature type="compositionally biased region" description="Acidic residues" evidence="3">
    <location>
        <begin position="445"/>
        <end position="456"/>
    </location>
</feature>
<feature type="binding site" evidence="2">
    <location>
        <position position="161"/>
    </location>
    <ligand>
        <name>Zn(2+)</name>
        <dbReference type="ChEBI" id="CHEBI:29105"/>
        <note>catalytic</note>
    </ligand>
</feature>
<feature type="binding site" evidence="2">
    <location>
        <position position="163"/>
    </location>
    <ligand>
        <name>Zn(2+)</name>
        <dbReference type="ChEBI" id="CHEBI:29105"/>
        <note>catalytic</note>
    </ligand>
</feature>
<feature type="binding site" evidence="2">
    <location>
        <position position="174"/>
    </location>
    <ligand>
        <name>Zn(2+)</name>
        <dbReference type="ChEBI" id="CHEBI:29105"/>
        <note>catalytic</note>
    </ligand>
</feature>
<organism>
    <name type="scientific">Candida albicans (strain SC5314 / ATCC MYA-2876)</name>
    <name type="common">Yeast</name>
    <dbReference type="NCBI Taxonomy" id="237561"/>
    <lineage>
        <taxon>Eukaryota</taxon>
        <taxon>Fungi</taxon>
        <taxon>Dikarya</taxon>
        <taxon>Ascomycota</taxon>
        <taxon>Saccharomycotina</taxon>
        <taxon>Pichiomycetes</taxon>
        <taxon>Debaryomycetaceae</taxon>
        <taxon>Candida/Lodderomyces clade</taxon>
        <taxon>Candida</taxon>
    </lineage>
</organism>
<name>CSN5_CANAL</name>
<reference key="1">
    <citation type="journal article" date="2004" name="Proc. Natl. Acad. Sci. U.S.A.">
        <title>The diploid genome sequence of Candida albicans.</title>
        <authorList>
            <person name="Jones T."/>
            <person name="Federspiel N.A."/>
            <person name="Chibana H."/>
            <person name="Dungan J."/>
            <person name="Kalman S."/>
            <person name="Magee B.B."/>
            <person name="Newport G."/>
            <person name="Thorstenson Y.R."/>
            <person name="Agabian N."/>
            <person name="Magee P.T."/>
            <person name="Davis R.W."/>
            <person name="Scherer S."/>
        </authorList>
    </citation>
    <scope>NUCLEOTIDE SEQUENCE [LARGE SCALE GENOMIC DNA]</scope>
    <source>
        <strain>SC5314 / ATCC MYA-2876</strain>
    </source>
</reference>
<reference key="2">
    <citation type="journal article" date="2007" name="Genome Biol.">
        <title>Assembly of the Candida albicans genome into sixteen supercontigs aligned on the eight chromosomes.</title>
        <authorList>
            <person name="van het Hoog M."/>
            <person name="Rast T.J."/>
            <person name="Martchenko M."/>
            <person name="Grindle S."/>
            <person name="Dignard D."/>
            <person name="Hogues H."/>
            <person name="Cuomo C."/>
            <person name="Berriman M."/>
            <person name="Scherer S."/>
            <person name="Magee B.B."/>
            <person name="Whiteway M."/>
            <person name="Chibana H."/>
            <person name="Nantel A."/>
            <person name="Magee P.T."/>
        </authorList>
    </citation>
    <scope>GENOME REANNOTATION</scope>
    <source>
        <strain>SC5314 / ATCC MYA-2876</strain>
    </source>
</reference>
<reference key="3">
    <citation type="journal article" date="2013" name="Genome Biol.">
        <title>Assembly of a phased diploid Candida albicans genome facilitates allele-specific measurements and provides a simple model for repeat and indel structure.</title>
        <authorList>
            <person name="Muzzey D."/>
            <person name="Schwartz K."/>
            <person name="Weissman J.S."/>
            <person name="Sherlock G."/>
        </authorList>
    </citation>
    <scope>NUCLEOTIDE SEQUENCE [LARGE SCALE GENOMIC DNA]</scope>
    <scope>GENOME REANNOTATION</scope>
    <source>
        <strain>SC5314 / ATCC MYA-2876</strain>
    </source>
</reference>